<sequence>MSSWFSYFGFSKGPPLEEVREESEEDAQVPEQVVSKNTEEEIADAINRLSPEQQNLIQDVLRRAESSRKEAKVVVDAEMMRSRFRQRDSIEDSQEIDHRYSLIQMDSIPENMVTNEMEERLATTQNEDIIPESSQRSPITPRKIHEKRASITEVTTENLRHRFQKMKSHLTTWFNSLDYDGEYIFDFTSKPEKSEKLGELTMQYIDALSQAIMISSHIEYSHHVLSSNPKFQQMCTQFCESIFSVAFDELTYQLLDDKVQETLNEYCGQIAEEALQAAFFTMISKTLSKSKECEQVLNEISSMHKSRSFESAKQLDQLLSRIEDDRESSRKSSPYLYEVLGKSSDSPSTSASVEYRSQNSYESEISFETPDIHVEELFDTHLNEKDETKLILKSVEDKLETTEIEGNVPKIDENLIENIQYDSGDQEHYIWISGPLGRINEEHEDDFEARSESSSGSMITHSTEPKMQLNVEEYIQTMIARVSTENEITNTSNQTANIVIDPGSIDSEEINKLAAKLVEESILKASQEAASDNHEKERSSATSKADYERSFDQDVTYERSSPLLEPSEEPVMESKEPELTQEEIDHIARIQSLAEQSSFEQASTIPDRPPLPARLPTVDEPIVISEQHEEDRSSATSGADYERSFDQEVTYERSSPLLEPCEEPVMESKEPELTQEEIDHIARIQSLAEKSSFEQASTIPDRPPLPARLPTVDEPIVISEQHEEDRSSATSGADYERSFDQDVTYEKSSPLLEPSEDPVMESKEPELTQEEIDHIARIQSLAEKSSFEQTSTIPDRPPLPARLPTVDEPIVSSEQHEEDRSSATSGADYERSFDQDVTYERSSPLLEPCEEPVMESKEPELTQEEIDNIAWIQSIAEQSSFEQASTIPDRPPLPVRLPTVDEPIVSSEQQEEDRSSATSGADYERSFDQDVTYERSSPLLEPSEDPVMESKEPELTQEEIDHIAWIQSIAEQSSFEQASTVPDRPPLPVRLPTVDEPIVSSEQHEDDRSSATSGADYERSFDQDVTYERSSPLLEPCEEPVMESKEPELTQEEIDHIAWIQSSAEQSSFEQASTVPDRPPLPVRLPTVDEPIVSSEQHEEDRSSATSGADYERSFDQDATYERSSPLLEPCEEPVMESRVPELTQEEIDHIARIQSLAEKSSFEQTSTIPDRPPLPARLPTVDEPIVSSEQHEEDRSSATSGADYERSSDQEVTYERSSPLLEPCEEPVMESKEPELTQEEIDHIAWIQSIAEQSSFEQASTVPDRPPLPVRLPTVDEPIVSSEQHEDDRSSATSGADYERSFDQDVTYERSSPLLEPCEEPVMESKEPELTQEEIDHIAWIQSIAEQSSFEQASTVPDRPPLPVRLPTVDEPIVSSEQHEDDRSSATSGDDYERPFDQDFTYERSSPLLEPCEEPVMESRVPELTQEEIDHIAWIQSIAEQSSFEQASTIPDRPPLPVRLPTVDEPIVSSEQHEDDRSSATSGADYERSSDQEVTYERSSPLLEPCEEPVMESKKPELTQEEIDHIAWIQSIAEQSSFEQASTIPDRPPLPVRLPTVDEPIVSSEQHEDDRSSATSGADYERSFDQDVTYERSSPLLEPSEDPVMESKEPELTQEEIDHIAWIQSIAEQSSFEQASTIPDRPPLPVQLPTVDEPIVSSEQQEEDRSSATSGADYERSFDQDVTYERSSPLLEPSEDPVMESKEPELTQEEIDHIAWIQSIAEQSSFEQASKIPDRPPLPVRLPTVDEPIVSSEQHEEDRSSATSGADYERSFDQDVTYERSSPLLEPSEEPVMESRVPELTQEEIDHIAWIQSIAEQSSFEQASTIPDRPPLPVRLPTVDEPIVSSEQHEEDRSSATSGADYERSSDQEVTYERSSPLLEPCEEPVMESKEPELTQEEIDHIAWIQSIAEQSSFEQASTIPDRPPLPVRLPTVDEPIVISEQHEEDRSSATSGADYERSFDQDVTYERSSPLLIPSEDPVMESKESELTQEEIDHIARIQSLAEQSLFEQASTIPDRPPLPVRLPTVDEPIVISEQHEGDRSSATSGADYERSFDQDVMYERSSPLLIPSEDPVMESKESELTQEEIDHIARIQSLAEQSSFEQASTIPDRPPLPVRLPTVDEPIVISEQHEGDRSSATSGADYERSFDQDVTYERSSPLLEPCDEPVMESKEPELTQEEIDHIARIQNLAEQSSFEQASTITDRPPLPVRLPTVDEPIVISEQHEGDRSSATPGADYERSYDQDVTYERSSPLLEPSEVPVMVSKAAVLTQEEIDHIAIMQSLAETEDRKALLEPCEEPVMESKKPELTQEEIDHIAWIQSIAEQSSFEQASTIPDRPPLPVRLPTVDEPIVSSEQHEDDRSSATSGADYERSIDQEVTYERSSPLLEPCEEPVMESKKPELTQEEIDHIAWIQSIAEQSSFEQASTIPDRPPLPVRLPTVDEPIVSSEQHEEDRSSATSGADYERSSDQEVTYDRSSPLLEPCEEPVMESKPELTQEEIDHIAWIQSIAEQSSFEQASTIPDRPPLPVRLPTVDEPIVSSEQHEEDRSSATSGADYERSFDQDVTYERSSPLLEPSEDPVMESKEPELTQEEIDHIAWIQSIAEQSSFEQASTIPDRPPLPVRLPTVDEPIVSSEQHEDDRSSATSGTDYERSFDQDVTYERSSPLLEPCEDPVMESKEPELTQEEIDHIAWIQSIAEQSSFEQASTIPDRPPLPVRLPTVDEPIVSSEQHEDDRSSATSGADYERSFDQDVTYERSSPLLEPSEDPVMESKEPELTQEEIDHIARIQSLAEQSSFEQASTVPDRPPLPVRLPTVDEPIVSSEQHEDDRSSATSGADYERPFDQDFTYERSSPLLEPCEEPVMESKKPELTQEEIDHIAWIQSIAEQSSFEQASTIPDRPPLPVRLPTVDEPIVSSEQHEEDRSSATSGADYERSFDQDVTYERSSPLLEPYEEPVMESKVPELTQEEIDHIARIQSLAEQSSFEQAPTIPDRPPLPVRLPTVDEPIVISEQHEGDRSSATSGADYERSFDQDVTYERSSPLLIPSEDPGNPSEPAPTPEEIHHTACDPSIAAPSSSFEQASTVPDRPPLPVRLPTVDEPIVSSEQHEDDRSSATSGADYERSFDQDVTYERSSPLLEPCEEPVMESKEPELTQEEIDHIAWIQSIAEQSSFEQASTVPDRPPLPVRLPTVDEPIVSSEQHEDDRSSATSGADYERSFDQDVTYERSSPLLEPCEEPVMESKEPELTQEEIDHIAWIQSIAEQSSFEQASTIPDRPPLPVRLPTVDEPIVSSEQHEDDRSSATSGTDYERSFDQDVTYERSSPLLEPSEEPVMLSKEAELTQEEIDHIAIIQSLAEKSSFEQFGIQTGHPFLPVRILTERQNDHDRISEEDNTSSCSSENNIILKYSDISYDRNTPLLNSDDEFLEKDFGASAESSEPSQGNWAKFEEISSSSNAEWPTNISTYKFPSFSEKNVNEDLLNKSSWDCRDNVIVDDVIEEEDENDLLGDVTYSREVNKDYWKDSSTIPLVRIECVSDEQINVNEETPGIDKEIKSAEISKDDNSVVSCSSENQIDHTNDEHFDFGQEDSEHEELKHCSSQYSFDSSLPPFHRYVACPSITPSEGDDGGSSETGHPTTDECYNEDVNRQIEQYSALASLSKSVLPVVEIKIDEATSESSVLQLDDDDKSISEQEDFIDNMDLTLKRNEDKTNITNLGASEIQQQEENEISAQTAEVESSDSWNSKTVKMLSDDSAFAEETQHVDLVSTSATKHEDYAEEQTLSQEEIDHIARITAMATEDNTDLQTLPTPQVRQNEPELSQKEIDHITRIAAMANKDFGMYPSIVSEHPAPVESELTQEELDHIARITEIASMDISTLPPPTGKPSETSLTQEELDHIARIAEMASAEYDVPVKIFEPPELTQEELDHIAKITAMAAQDVQLPATQRSITHKVSLTPPPPPPSKHFEQDLTQEELDHIARIAEMADMDYNTPFTAEPVQDEEEEPITESGSDATSGADIFDEQEDASSDREKRSGTSFPDNAETSLEDDTAHEKSYPQLEPSEEPVMKSKEPELTQEEIDHFARIQSLAEQSSFEQASTIPDRQPLPVRLPTVDEPIVISEQHEGDRSSATSGADYERSFDQDVTYERSSPLLEPCDEPVMESKEPELTQEEIDHIARIQSLAEQSSFEQTSTIPDRQPLPVRHPTVDEPIVISGQHEEDRSSATSGADYQQSFDQDDPSKRSSPLLEPNEEQMMESTQPELTQDHSSTTISDILIKEVDKFIPEAKFGRSFEEHDGRLIHSGNLDIDVPLESDCRKTFGQDKSESTMPTELTEADLERVARIHQHFDQSSFDEVVVPTSHPDDGRSSSVRSSEYLDTVTPLSSCAATPILTNPKLVQEELDHIAFIQKMAEQFTFDEVETPILRQNTTSHSVSYNFVQRSCHEDVSFQKKESPALTSLKEIAESSQLTQEELDHIASIQQMADQPYFEESHFIFKSDVKEEKKEDKLHHELFVEECVAQESITQDDVERKPLELTQEEIDHIAKIQKLADQSSFEQASAIQSLPTAEEPIVEKREDDKSNITSGADYQQSFDQDVTYKRSSPLLEPSEEPVMESKEPELTQEEIDHIARIQSLAEQSSFEQASTIPDRPPLPVRLPTVDEPIVISEQHEGDISSATSGADYERSLDQDVTYERSSPLLEPCDEPVMESKEPELTQEEIDHIARIQSLAEQSSFEQASTIPDRPPLPVRLPTVDEPIVSSEQHEEDRSSATSGADIERSFDIDVSQDRVSPISEHEEGVTQEEMEHIARIAAMAAEDFKHPEGNLEPEFSQPDKDHIAMMKKLEEQSKMENQELPANPIIHTDQVDRQESEGSSSATSGADIPSSFDISSPIPPEPLQDHITTSQKLISRPSIEISNVPSRLPELSLTAVQRGSEDISSATSGAGIERSFDGISPLPNFSEEPIMINDEMNYVLMVTHMAQKIDVQQPIQETSTLRKAVLCESPEDFSEATSGADTESISETTANKKDSNDSNGLTEEEMKHIAEVLRKAEASSAASGMFERDSNLPPLRRTSITYTSHFSPSVIRDLRSSTSFTSVPAASDEEEIVKGKLKREPSTQVVYTDHFLRDLQSINAYLEKGEDGTDVTIEETSHDNESSSLPEEDEHITDVYHFDVGTSLLVQQYILQQSTFQEAAGLHISPIRRTMSAACTAEKHIDDEENIKEREVKHAQSHDQIKKRAGGEPNAYELLEQHSFRHTQPLLCNVDFLWRLNFAANRMTEEIADEAGRELRAHYRNVANPRARYFSDAYDIGTDDEEEEVTETSQAGFSVEPMRHEEQSYGLFSFFTSSKRSVSDRPRSALAMFTNPSPSASPSLLRKESEDRGDILNLLRRSSGADSRASNDSSASRLPDTALVGLSEAEKQHIMSVMSRSNRNTSPMTSRRCSSALQMLPEVDNLSEAEKEHIQTILEKAESKTPFMIKVPMKKQISSRTESTNSRVSSEGIDEEVENEVQRKKTIEEPIVEIPSRAVTPRNNLRVIPPPIAISHPTPPHSAKTDTGSRHSSGSSAHSQFGFSTPSISGFKIFFDKAKTATETLVKEIKDEVIVEVDKDKTETKPEPNVSNELTAEEFEHIRRINEMAGIDEPIQPPPIAQERRKSSVVSGLKNMFGVGKHDESELTTEEKEHIRQMSLMAEKMDEEILDEQSKPKSTFGLKNFFGKATQSVMHATDSVIKNVQNQSKQSLSGLTQEELDNIAQATESAQQESKQELTQDEIDHIARINAMAAEDFEQPAVNMNQGLSQAEKDHIARIEAMAADDSQSKIIVPPPSIIQKDIELSMEEMDHIARIAAMADEDFTHPVKGAVAPIYDENYSRDDGAIDRFPASTATPVFAQPSEIELSEEEREHISRIAAMAEEDFNTPYVSTHPTQQIEIELTEEEKEHIARIEAMASEDLNAPSPFIQQEQRVATMPVPINYHVEEPTLSQEEIDHIARITAMATEDNTDLQTLPTPQVKQNEPELSQEEIDHITRIAAMANEDFGMYPSIVSEHPAPVESELTQEELDHIAKITGMASMDISTLPPPTGKPSETSLTQEELDHIARIAEMASAEYDVPVKIFEPPELTQEELDHIAKITAMAAQDVQLPATQRSITHKVSLTPPPPPPSKHFEQDLTQEELDHIARIAEMADMDYNTPFTAEPVQDEEEEPITESGSDATSGADIFDEQEDASSGASGSFDNNNAQVLTSGFSPDRVTSPAALDTTEEPQGPIMAQKTVSPTPSADSMASRKSSEYDIRSISEIRQESESDIGKWYEEQLSFMRQSIHDEEEDVGHEIRTDVEEFPLEYVEDQLHFLEGIDVESQHHEPTTSSAFFGTGRSIGEGEKRKYGDDAVEQQKLENYEEEEKTKSSSREAFDDGFETQREESLRAQQTPIDSLPGSRMLKRPNFGFLSNIANDAINKAKEAGSQIQAAVPIKPSSSSSNIVNNNVFSSSKSSTSLGTSAPTKSIPSPQIGIPMDGLSEEERRQIMSVMAAADFDDSVNNVKPSTSGSSNIPAGMEDLSEAEREKIMSVMANAEMEMGARFPPPSSQIPTRSPSVMSSSIMSELPPGLDDLSDDERMKIMAVMAEADMQNVRKPIARGPPPMPPSTSMIPPGMEGLSEEERQKIMSVMANAETDSSSSVITSRQPSRSPSVARMQPQLMPPQQAIPIIPPGLEGLSDEERHTIMSVMAEAEFEESRSQVPSRQPSRSPSFVNPQQSFHPIPSFEPIVPPGLEDLSEEERQKIMSVMMNAEVEESRSQLPSRQPSRSPSVAMIQAPAVPIIPSGMEDLPEAERQKIMSVMAEAEIQNFVPSRSPSNYSMQPVPVIPHGLEDLSEAERQKILSVMAEAEIDSAKIPSRSTSSYSMPPPLPQMSQPEITTGLEHSSEADMEFGRDSSRSHQVIPPGLENLSEEERQQIMSVMAHAELESIIPSGHIDQPISLPRGHTGFKPAGIVNEDELFETERKQREESPTRESGYATSTSYERELAMGDEERMDGLLEDIIRIREGARSRRDSRDEVLHRREEDPEVHTPEESSTAVVTDVPSVSPVTENVPEKQTDDFDFTYSDSRFAEIVQMQEEEEAGSLQKQKVDEKPRMWETVFDGDESELPHQDFVFNEPTTKKTSDFDFPKETDEVFEKPSEIQRIRVTKNHDVDMDEIYDNVIATEAPSSVSQRRQPVDSETSVKSRTIQRGPTKPPPMIKITVEEETKSDSDEESCSEDDEEYPDRVVAAPTAPAPTFEEVENERIRQEELGKEVLQQIMAFGEVANDEFDVQWAKTTTSQTPSTSTKPTVTAPKRSDPIPIAPSQRSKEIEEERIRTEALEEEEFYRHGHNPFLESPEEDEVSINMEDVEYAEIARLYESANQTMRRPGPVYTITEDESEDDGTLSNSESRLVAREKRLMDKKTADSLMAKYQKMKKVQAKQTTTASSTSVTATPAYAIINFSDLKTSTRTTDSNSYFETTKNIPALEIKDPKKDIPPEISASIDKTMAEVDALLGQVYTNEKAIPNLLCFDQSNFSNHPPTSSASTSTADDLILLKNNNSSSPSFLLPLQSSVLGSQLDSVRDDNERNENETTSPRGLKRSPGMLLPSPTSTSIFPMPPTAAESVGAAIGATTASMFGGISVADPPPTMDGLTNSYKWLQNIEDDGNLANNDMGRRKLPSIPPNSSAFPPPTSVTTNVISTDTSMPSTSSGPAPTYVDDYNVTLPSDPIVAESLLKGGSLTRRHQHQQQHQAPVYITSSASRPPSAAGSNIFQESRPTSSLSMYQNDVILSRPGSAASNYTTASTINPTILAGASYSSKASSHIRQPVSVRSPRAQTGTTQTTAASGSASNSIRPSIGSSSVTTRVPNTLARVLLKKELKDVLIQRKQRLEATEIEANQRHYKVQKMLITGLLPEKPEDDIPNIVKCDLPADLVRGVHISMQPPSPAVSAFSPRRYHHPTSVASHQSHPSTFKHMSKSIACQADELPPVKPMISLRTQLDMERRPQLMTYVGKRSAETQTELANYESITPTVRYGSIPRSSRERTASRRYREQQQQIYNQMPQNHNDLLEITKKYFEDYDRQLREFGERARRHSRRRFDFHDDDDQDDMRKNQVMHELARRKERMCASCEILSTTDPIRTALNPNVPMSSDYSSHVPHYGSLPRIDYPRGTRSDVRDFTYRQQHLPQQPPTNYSYNYGSLPRNFERGFSDLPPIEIENEQSFGAPPRHRSNLGYESTSMFNLSDPVYLGYDSIPMVQHQQPRVYDQIPSGYAQDTTNLNSLNQGVRGSDMVSQYASYLNSQFQSGLQQSAQLPQPMIPITRYDAPMSDPYVSSRSRLVDQMNQGYNSNQYHHHSTLLAPKSAQMTHIAPTYNQLAQQQGIPMQNTQMDPLMMSSGRIPSSSSQVYSRNEMNYGSRPAQSSLFEYGNRRQYGAAPPPTYDVPNVSSASDWRTTQQQGLIQQMPMQMQQQQHNTFDARWPKEDALSRMYATASRRRAQETALTSSNKISTGSRSYARRPIRPSSYRNPEATNSMPDRHVARRTAENSRYDVKRILLTRSYKHHNIYNDLGVRVVGGKRQMNGELSAYVSQLHSTANNQTLGQIKIGDEVVEWNGILLRGKTFEEVERIVNKSHGEIEMVIRTYKNPSSGVYDTLPLNRNTMRDDLSPDRVPPVPMHRINGINNNSVLHHHTLSDSSCHGHIQVSLGYDGNSRLVAKIIRARGLKSRDQSRSAPNPFVKVYLLPGRKVSHKRRTRFVDSSCAPEWNQVLEYQVAPHTLNTMFLEFTVCDYQRDVDDLPLGNVQIPLADKSAINTGPRWYPLQGSYDQPIPQHYMNGTSLSQIPSIAAASKHSAAVHNHHNHNYSEVPPSILYPKGGVGTRHPDKPVRHATFNYNPVSLDIGYPAIN</sequence>
<gene>
    <name evidence="6 9" type="primary">cla-1</name>
    <name evidence="9" type="synonym">tag-80</name>
    <name evidence="9" type="ORF">F45E4.3</name>
</gene>
<proteinExistence type="evidence at protein level"/>
<keyword id="KW-0877">Alternative promoter usage</keyword>
<keyword id="KW-0025">Alternative splicing</keyword>
<keyword id="KW-0966">Cell projection</keyword>
<keyword id="KW-0175">Coiled coil</keyword>
<keyword id="KW-1185">Reference proteome</keyword>
<keyword id="KW-0770">Synapse</keyword>
<comment type="function">
    <text evidence="5">Required for synapse development in the active zone of presynaptic terminals of specific neurons including serotonergic NSM neurons (PubMed:29160205). The active zone is a protein-dense neuronal region within the presynaptic bouton, from which synaptic vesicles send neurotransmitter signals across the synapse (PubMed:29160205). Plays a role in the recruitment and clustering of synaptic vesicles in the active zone of presynaptic terminals in serotonergic NSM neurons, and coordinates the release of synaptic vesicles at presynaptic terminals to regulate neurotransmission at neuromuscular junctions (PubMed:29160205). Regulates synapse number in inhibitory motor neurons and plays a role in spontaneous postsynaptic synaptic vesicle release in muscle cells (PubMed:29160205).</text>
</comment>
<comment type="interaction">
    <interactant intactId="EBI-2916517">
        <id>W6RTA4</id>
    </interactant>
    <interactant intactId="EBI-311852">
        <id>Q19980</id>
        <label>cat-4</label>
    </interactant>
    <organismsDiffer>false</organismsDiffer>
    <experiments>2</experiments>
</comment>
<comment type="subcellular location">
    <subcellularLocation>
        <location evidence="5">Synapse</location>
    </subcellularLocation>
    <subcellularLocation>
        <location evidence="5">Cell projection</location>
        <location evidence="5">Axon</location>
    </subcellularLocation>
    <text evidence="5">Localization at the synapse may depend on other active zone proteins such as syd-1 and syd-2 (PubMed:29160205). Anchored via the C-terminus to the active zone, a protein-dense region within the presynaptic bouton, of the synaptic compartment (PubMed:29160205). The N-terminus extends away from the active zone (PubMed:29160205).</text>
</comment>
<comment type="alternative products">
    <event type="alternative promoter"/>
    <event type="alternative splicing"/>
    <isoform>
        <id>W6RTA4-1</id>
        <name evidence="9">a</name>
        <sequence type="displayed"/>
    </isoform>
    <isoform>
        <id>W6RTA4-2</id>
        <name evidence="10">b</name>
        <sequence type="described" ref="VSP_059922 VSP_059923"/>
    </isoform>
    <isoform>
        <id>W6RTA4-3</id>
        <name evidence="11">c</name>
        <sequence type="described" ref="VSP_059921 VSP_059922 VSP_059923"/>
    </isoform>
    <isoform>
        <id>W6RTA4-4</id>
        <name evidence="12">d</name>
        <sequence type="described" ref="VSP_059921"/>
    </isoform>
    <isoform>
        <id>W6RTA4-5</id>
        <name evidence="13">e</name>
        <sequence type="described" ref="VSP_059920"/>
    </isoform>
    <isoform>
        <id>W6RTA4-6</id>
        <name evidence="14">f</name>
        <sequence type="described" ref="VSP_059920 VSP_059922 VSP_059923"/>
    </isoform>
</comment>
<comment type="tissue specificity">
    <text evidence="5">Expressed in the nervous system.</text>
</comment>
<comment type="developmental stage">
    <text evidence="5">Expressed in the nervous system from the three-fold stage of embryonic development.</text>
</comment>
<comment type="miscellaneous">
    <molecule>Isoform b</molecule>
    <text evidence="5">Produced by alternative splicing.</text>
</comment>
<comment type="miscellaneous">
    <molecule>Isoform c</molecule>
    <text evidence="5">Produced by alternative promoter usage and alternative splicing.</text>
</comment>
<comment type="miscellaneous">
    <molecule>Isoform d</molecule>
    <text evidence="5">Produced by alternative promoter usage.</text>
</comment>
<comment type="miscellaneous">
    <molecule>Isoform e</molecule>
    <text evidence="5">Produced by alternative promoter usage.</text>
</comment>
<comment type="miscellaneous">
    <molecule>Isoform f</molecule>
    <text evidence="5">Produced by alternative promoter usage and alternative splicing.</text>
</comment>
<feature type="chain" id="PRO_0000445624" description="Protein clarinet">
    <location>
        <begin position="1"/>
        <end position="8922"/>
    </location>
</feature>
<feature type="domain" description="PDZ" evidence="3">
    <location>
        <begin position="8570"/>
        <end position="8661"/>
    </location>
</feature>
<feature type="domain" description="C2" evidence="2">
    <location>
        <begin position="8714"/>
        <end position="8835"/>
    </location>
</feature>
<feature type="region of interest" description="Disordered" evidence="4">
    <location>
        <begin position="11"/>
        <end position="35"/>
    </location>
</feature>
<feature type="region of interest" description="Disordered" evidence="4">
    <location>
        <begin position="527"/>
        <end position="579"/>
    </location>
</feature>
<feature type="region of interest" description="Disordered" evidence="4">
    <location>
        <begin position="622"/>
        <end position="673"/>
    </location>
</feature>
<feature type="region of interest" description="Disordered" evidence="4">
    <location>
        <begin position="687"/>
        <end position="860"/>
    </location>
</feature>
<feature type="region of interest" description="Disordered" evidence="4">
    <location>
        <begin position="880"/>
        <end position="955"/>
    </location>
</feature>
<feature type="region of interest" description="Disordered" evidence="4">
    <location>
        <begin position="971"/>
        <end position="1049"/>
    </location>
</feature>
<feature type="region of interest" description="Disordered" evidence="4">
    <location>
        <begin position="1062"/>
        <end position="1139"/>
    </location>
</feature>
<feature type="region of interest" description="Disordered" evidence="4">
    <location>
        <begin position="1151"/>
        <end position="1331"/>
    </location>
</feature>
<feature type="region of interest" description="Disordered" evidence="4">
    <location>
        <begin position="1347"/>
        <end position="1420"/>
    </location>
</feature>
<feature type="region of interest" description="Disordered" evidence="4">
    <location>
        <begin position="1444"/>
        <end position="1520"/>
    </location>
</feature>
<feature type="region of interest" description="Disordered" evidence="4">
    <location>
        <begin position="1538"/>
        <end position="1619"/>
    </location>
</feature>
<feature type="region of interest" description="Disordered" evidence="4">
    <location>
        <begin position="1632"/>
        <end position="1710"/>
    </location>
</feature>
<feature type="region of interest" description="Disordered" evidence="4">
    <location>
        <begin position="1726"/>
        <end position="1801"/>
    </location>
</feature>
<feature type="region of interest" description="Disordered" evidence="4">
    <location>
        <begin position="1820"/>
        <end position="1898"/>
    </location>
</feature>
<feature type="region of interest" description="Disordered" evidence="4">
    <location>
        <begin position="1939"/>
        <end position="1992"/>
    </location>
</feature>
<feature type="region of interest" description="Disordered" evidence="4">
    <location>
        <begin position="2032"/>
        <end position="2084"/>
    </location>
</feature>
<feature type="region of interest" description="Disordered" evidence="4">
    <location>
        <begin position="2126"/>
        <end position="2175"/>
    </location>
</feature>
<feature type="region of interest" description="Disordered" evidence="4">
    <location>
        <begin position="2194"/>
        <end position="2213"/>
    </location>
</feature>
<feature type="region of interest" description="Disordered" evidence="4">
    <location>
        <begin position="2220"/>
        <end position="2246"/>
    </location>
</feature>
<feature type="region of interest" description="Disordered" evidence="4">
    <location>
        <begin position="2329"/>
        <end position="2403"/>
    </location>
</feature>
<feature type="region of interest" description="Disordered" evidence="4">
    <location>
        <begin position="2423"/>
        <end position="2497"/>
    </location>
</feature>
<feature type="region of interest" description="Disordered" evidence="4">
    <location>
        <begin position="2516"/>
        <end position="2594"/>
    </location>
</feature>
<feature type="region of interest" description="Disordered" evidence="4">
    <location>
        <begin position="2610"/>
        <end position="2684"/>
    </location>
</feature>
<feature type="region of interest" description="Disordered" evidence="4">
    <location>
        <begin position="2704"/>
        <end position="2845"/>
    </location>
</feature>
<feature type="region of interest" description="Disordered" evidence="4">
    <location>
        <begin position="2892"/>
        <end position="2963"/>
    </location>
</feature>
<feature type="region of interest" description="Disordered" evidence="4">
    <location>
        <begin position="2983"/>
        <end position="3155"/>
    </location>
</feature>
<feature type="region of interest" description="Disordered" evidence="4">
    <location>
        <begin position="3171"/>
        <end position="3249"/>
    </location>
</feature>
<feature type="region of interest" description="Disordered" evidence="4">
    <location>
        <begin position="3268"/>
        <end position="3337"/>
    </location>
</feature>
<feature type="region of interest" description="Disordered" evidence="4">
    <location>
        <begin position="3619"/>
        <end position="3639"/>
    </location>
</feature>
<feature type="region of interest" description="Disordered" evidence="4">
    <location>
        <begin position="3995"/>
        <end position="4079"/>
    </location>
</feature>
<feature type="region of interest" description="Disordered" evidence="4">
    <location>
        <begin position="4117"/>
        <end position="4169"/>
    </location>
</feature>
<feature type="region of interest" description="Disordered" evidence="4">
    <location>
        <begin position="4181"/>
        <end position="4271"/>
    </location>
</feature>
<feature type="region of interest" description="Disordered" evidence="4">
    <location>
        <begin position="4557"/>
        <end position="4624"/>
    </location>
</feature>
<feature type="region of interest" description="Disordered" evidence="4">
    <location>
        <begin position="4636"/>
        <end position="4656"/>
    </location>
</feature>
<feature type="region of interest" description="Disordered" evidence="4">
    <location>
        <begin position="4666"/>
        <end position="4685"/>
    </location>
</feature>
<feature type="region of interest" description="Disordered" evidence="4">
    <location>
        <begin position="4730"/>
        <end position="4801"/>
    </location>
</feature>
<feature type="region of interest" description="Disordered" evidence="4">
    <location>
        <begin position="4855"/>
        <end position="4899"/>
    </location>
</feature>
<feature type="region of interest" description="Disordered" evidence="4">
    <location>
        <begin position="5004"/>
        <end position="5036"/>
    </location>
</feature>
<feature type="region of interest" description="Disordered" evidence="4">
    <location>
        <begin position="5360"/>
        <end position="5379"/>
    </location>
</feature>
<feature type="region of interest" description="Disordered" evidence="4">
    <location>
        <begin position="5390"/>
        <end position="5413"/>
    </location>
</feature>
<feature type="region of interest" description="Disordered" evidence="4">
    <location>
        <begin position="5484"/>
        <end position="5511"/>
    </location>
</feature>
<feature type="region of interest" description="Disordered" evidence="4">
    <location>
        <begin position="5540"/>
        <end position="5572"/>
    </location>
</feature>
<feature type="region of interest" description="Disordered" evidence="4">
    <location>
        <begin position="6194"/>
        <end position="6303"/>
    </location>
</feature>
<feature type="region of interest" description="Disordered" evidence="4">
    <location>
        <begin position="6354"/>
        <end position="6437"/>
    </location>
</feature>
<feature type="region of interest" description="Disordered" evidence="4">
    <location>
        <begin position="6487"/>
        <end position="6510"/>
    </location>
</feature>
<feature type="region of interest" description="Disordered" evidence="4">
    <location>
        <begin position="6577"/>
        <end position="6609"/>
    </location>
</feature>
<feature type="region of interest" description="Disordered" evidence="4">
    <location>
        <begin position="6668"/>
        <end position="6691"/>
    </location>
</feature>
<feature type="region of interest" description="Disordered" evidence="4">
    <location>
        <begin position="6728"/>
        <end position="6768"/>
    </location>
</feature>
<feature type="region of interest" description="Disordered" evidence="4">
    <location>
        <begin position="6998"/>
        <end position="7018"/>
    </location>
</feature>
<feature type="region of interest" description="Disordered" evidence="4">
    <location>
        <begin position="7045"/>
        <end position="7098"/>
    </location>
</feature>
<feature type="region of interest" description="Disordered" evidence="4">
    <location>
        <begin position="7137"/>
        <end position="7175"/>
    </location>
</feature>
<feature type="region of interest" description="Disordered" evidence="4">
    <location>
        <begin position="7202"/>
        <end position="7263"/>
    </location>
</feature>
<feature type="region of interest" description="Disordered" evidence="4">
    <location>
        <begin position="7313"/>
        <end position="7350"/>
    </location>
</feature>
<feature type="region of interest" description="Disordered" evidence="4">
    <location>
        <begin position="7598"/>
        <end position="7623"/>
    </location>
</feature>
<feature type="region of interest" description="Disordered" evidence="4">
    <location>
        <begin position="7760"/>
        <end position="7797"/>
    </location>
</feature>
<feature type="region of interest" description="Disordered" evidence="4">
    <location>
        <begin position="7842"/>
        <end position="7881"/>
    </location>
</feature>
<feature type="region of interest" description="Disordered" evidence="4">
    <location>
        <begin position="8510"/>
        <end position="8562"/>
    </location>
</feature>
<feature type="coiled-coil region" evidence="1">
    <location>
        <begin position="385"/>
        <end position="405"/>
    </location>
</feature>
<feature type="coiled-coil region" evidence="1">
    <location>
        <begin position="7895"/>
        <end position="7915"/>
    </location>
</feature>
<feature type="compositionally biased region" description="Acidic residues" evidence="4">
    <location>
        <begin position="19"/>
        <end position="28"/>
    </location>
</feature>
<feature type="compositionally biased region" description="Basic and acidic residues" evidence="4">
    <location>
        <begin position="531"/>
        <end position="552"/>
    </location>
</feature>
<feature type="compositionally biased region" description="Basic and acidic residues" evidence="4">
    <location>
        <begin position="760"/>
        <end position="776"/>
    </location>
</feature>
<feature type="compositionally biased region" description="Low complexity" evidence="4">
    <location>
        <begin position="1062"/>
        <end position="1076"/>
    </location>
</feature>
<feature type="compositionally biased region" description="Basic and acidic residues" evidence="4">
    <location>
        <begin position="1230"/>
        <end position="1244"/>
    </location>
</feature>
<feature type="compositionally biased region" description="Polar residues" evidence="4">
    <location>
        <begin position="1251"/>
        <end position="1261"/>
    </location>
</feature>
<feature type="compositionally biased region" description="Basic and acidic residues" evidence="4">
    <location>
        <begin position="1606"/>
        <end position="1619"/>
    </location>
</feature>
<feature type="compositionally biased region" description="Basic and acidic residues" evidence="4">
    <location>
        <begin position="1700"/>
        <end position="1710"/>
    </location>
</feature>
<feature type="compositionally biased region" description="Basic and acidic residues" evidence="4">
    <location>
        <begin position="1888"/>
        <end position="1898"/>
    </location>
</feature>
<feature type="compositionally biased region" description="Basic and acidic residues" evidence="4">
    <location>
        <begin position="1982"/>
        <end position="1992"/>
    </location>
</feature>
<feature type="compositionally biased region" description="Polar residues" evidence="4">
    <location>
        <begin position="2194"/>
        <end position="2204"/>
    </location>
</feature>
<feature type="compositionally biased region" description="Basic and acidic residues" evidence="4">
    <location>
        <begin position="2584"/>
        <end position="2594"/>
    </location>
</feature>
<feature type="compositionally biased region" description="Basic and acidic residues" evidence="4">
    <location>
        <begin position="2772"/>
        <end position="2788"/>
    </location>
</feature>
<feature type="compositionally biased region" description="Polar residues" evidence="4">
    <location>
        <begin position="2793"/>
        <end position="2803"/>
    </location>
</feature>
<feature type="compositionally biased region" description="Polar residues" evidence="4">
    <location>
        <begin position="3076"/>
        <end position="3085"/>
    </location>
</feature>
<feature type="compositionally biased region" description="Polar residues" evidence="4">
    <location>
        <begin position="4035"/>
        <end position="4044"/>
    </location>
</feature>
<feature type="compositionally biased region" description="Basic and acidic residues" evidence="4">
    <location>
        <begin position="4065"/>
        <end position="4079"/>
    </location>
</feature>
<feature type="compositionally biased region" description="Polar residues" evidence="4">
    <location>
        <begin position="4182"/>
        <end position="4195"/>
    </location>
</feature>
<feature type="compositionally biased region" description="Polar residues" evidence="4">
    <location>
        <begin position="4223"/>
        <end position="4234"/>
    </location>
</feature>
<feature type="compositionally biased region" description="Polar residues" evidence="4">
    <location>
        <begin position="4255"/>
        <end position="4271"/>
    </location>
</feature>
<feature type="compositionally biased region" description="Basic and acidic residues" evidence="4">
    <location>
        <begin position="4571"/>
        <end position="4580"/>
    </location>
</feature>
<feature type="compositionally biased region" description="Polar residues" evidence="4">
    <location>
        <begin position="4581"/>
        <end position="4594"/>
    </location>
</feature>
<feature type="compositionally biased region" description="Basic and acidic residues" evidence="4">
    <location>
        <begin position="4613"/>
        <end position="4624"/>
    </location>
</feature>
<feature type="compositionally biased region" description="Polar residues" evidence="4">
    <location>
        <begin position="4636"/>
        <end position="4645"/>
    </location>
</feature>
<feature type="compositionally biased region" description="Polar residues" evidence="4">
    <location>
        <begin position="4730"/>
        <end position="4739"/>
    </location>
</feature>
<feature type="compositionally biased region" description="Low complexity" evidence="4">
    <location>
        <begin position="4871"/>
        <end position="4890"/>
    </location>
</feature>
<feature type="compositionally biased region" description="Polar residues" evidence="4">
    <location>
        <begin position="5009"/>
        <end position="5023"/>
    </location>
</feature>
<feature type="compositionally biased region" description="Low complexity" evidence="4">
    <location>
        <begin position="5390"/>
        <end position="5407"/>
    </location>
</feature>
<feature type="compositionally biased region" description="Polar residues" evidence="4">
    <location>
        <begin position="5486"/>
        <end position="5499"/>
    </location>
</feature>
<feature type="compositionally biased region" description="Pro residues" evidence="4">
    <location>
        <begin position="5540"/>
        <end position="5550"/>
    </location>
</feature>
<feature type="compositionally biased region" description="Low complexity" evidence="4">
    <location>
        <begin position="5560"/>
        <end position="5572"/>
    </location>
</feature>
<feature type="compositionally biased region" description="Polar residues" evidence="4">
    <location>
        <begin position="6225"/>
        <end position="6245"/>
    </location>
</feature>
<feature type="compositionally biased region" description="Polar residues" evidence="4">
    <location>
        <begin position="6270"/>
        <end position="6284"/>
    </location>
</feature>
<feature type="compositionally biased region" description="Basic and acidic residues" evidence="4">
    <location>
        <begin position="6285"/>
        <end position="6303"/>
    </location>
</feature>
<feature type="compositionally biased region" description="Basic and acidic residues" evidence="4">
    <location>
        <begin position="6376"/>
        <end position="6422"/>
    </location>
</feature>
<feature type="compositionally biased region" description="Polar residues" evidence="4">
    <location>
        <begin position="6494"/>
        <end position="6505"/>
    </location>
</feature>
<feature type="compositionally biased region" description="Low complexity" evidence="4">
    <location>
        <begin position="6590"/>
        <end position="6600"/>
    </location>
</feature>
<feature type="compositionally biased region" description="Polar residues" evidence="4">
    <location>
        <begin position="6670"/>
        <end position="6687"/>
    </location>
</feature>
<feature type="compositionally biased region" description="Low complexity" evidence="4">
    <location>
        <begin position="6735"/>
        <end position="6747"/>
    </location>
</feature>
<feature type="compositionally biased region" description="Basic and acidic residues" evidence="4">
    <location>
        <begin position="6998"/>
        <end position="7008"/>
    </location>
</feature>
<feature type="compositionally biased region" description="Basic and acidic residues" evidence="4">
    <location>
        <begin position="7045"/>
        <end position="7069"/>
    </location>
</feature>
<feature type="compositionally biased region" description="Low complexity" evidence="4">
    <location>
        <begin position="7071"/>
        <end position="7086"/>
    </location>
</feature>
<feature type="compositionally biased region" description="Basic and acidic residues" evidence="4">
    <location>
        <begin position="7155"/>
        <end position="7175"/>
    </location>
</feature>
<feature type="compositionally biased region" description="Acidic residues" evidence="4">
    <location>
        <begin position="7248"/>
        <end position="7260"/>
    </location>
</feature>
<feature type="compositionally biased region" description="Low complexity" evidence="4">
    <location>
        <begin position="7313"/>
        <end position="7331"/>
    </location>
</feature>
<feature type="compositionally biased region" description="Basic and acidic residues" evidence="4">
    <location>
        <begin position="7599"/>
        <end position="7609"/>
    </location>
</feature>
<feature type="compositionally biased region" description="Low complexity" evidence="4">
    <location>
        <begin position="7777"/>
        <end position="7788"/>
    </location>
</feature>
<feature type="compositionally biased region" description="Low complexity" evidence="4">
    <location>
        <begin position="7854"/>
        <end position="7880"/>
    </location>
</feature>
<feature type="compositionally biased region" description="Polar residues" evidence="4">
    <location>
        <begin position="8517"/>
        <end position="8530"/>
    </location>
</feature>
<feature type="compositionally biased region" description="Polar residues" evidence="4">
    <location>
        <begin position="8541"/>
        <end position="8551"/>
    </location>
</feature>
<feature type="compositionally biased region" description="Basic and acidic residues" evidence="4">
    <location>
        <begin position="8552"/>
        <end position="8562"/>
    </location>
</feature>
<feature type="splice variant" id="VSP_059920" description="In isoform e and isoform f." evidence="7">
    <location>
        <begin position="1"/>
        <end position="7691"/>
    </location>
</feature>
<feature type="splice variant" id="VSP_059921" description="In isoform c and isoform d." evidence="7">
    <location>
        <begin position="1"/>
        <end position="6280"/>
    </location>
</feature>
<feature type="splice variant" id="VSP_059922" description="In isoform b, isoform c and isoform f." evidence="7">
    <original>ETALTSSNKIST</original>
    <variation>GDNSPSFLIDGR</variation>
    <location>
        <begin position="8516"/>
        <end position="8527"/>
    </location>
</feature>
<feature type="splice variant" id="VSP_059923" description="In isoform b, isoform c and isoform f." evidence="7">
    <location>
        <begin position="8528"/>
        <end position="8922"/>
    </location>
</feature>
<feature type="mutagenesis site" description="In wy1048; defective morphology of the active zone region of the synapse, and abnormal clustering and localization of synaptic vesicles at presynaptic terminals of serotonergic NSM neurons. Defective synaptic transmission at neuromuscular junctions with increased sensitivity to the acetylcholinesterase inhibitor Aldicarb, and a 46% reduction in the frequency of spontaneous postsynaptic currents in postsynaptic muscle cells." evidence="5">
    <location>
        <begin position="6751"/>
        <end position="8892"/>
    </location>
</feature>
<dbReference type="EMBL" id="BX284604">
    <property type="protein sequence ID" value="CCD63778.1"/>
    <property type="molecule type" value="Genomic_DNA"/>
</dbReference>
<dbReference type="EMBL" id="BX284604">
    <property type="protein sequence ID" value="CCD63779.1"/>
    <property type="molecule type" value="Genomic_DNA"/>
</dbReference>
<dbReference type="EMBL" id="BX284604">
    <property type="protein sequence ID" value="CDM63472.1"/>
    <property type="molecule type" value="Genomic_DNA"/>
</dbReference>
<dbReference type="EMBL" id="BX284604">
    <property type="protein sequence ID" value="CDM63473.1"/>
    <property type="molecule type" value="Genomic_DNA"/>
</dbReference>
<dbReference type="EMBL" id="BX284604">
    <property type="protein sequence ID" value="CDM63478.2"/>
    <property type="molecule type" value="Genomic_DNA"/>
</dbReference>
<dbReference type="EMBL" id="BX284604">
    <property type="protein sequence ID" value="CDM63477.2"/>
    <property type="molecule type" value="Genomic_DNA"/>
</dbReference>
<dbReference type="RefSeq" id="NP_001294143.1">
    <molecule id="W6RTA4-3"/>
    <property type="nucleotide sequence ID" value="NM_001307214.3"/>
</dbReference>
<dbReference type="RefSeq" id="NP_001294144.1">
    <molecule id="W6RTA4-4"/>
    <property type="nucleotide sequence ID" value="NM_001307215.3"/>
</dbReference>
<dbReference type="RefSeq" id="NP_001294148.2">
    <molecule id="W6RTA4-1"/>
    <property type="nucleotide sequence ID" value="NM_001307219.4"/>
</dbReference>
<dbReference type="RefSeq" id="NP_001294149.2">
    <molecule id="W6RTA4-2"/>
    <property type="nucleotide sequence ID" value="NM_001307220.4"/>
</dbReference>
<dbReference type="RefSeq" id="NP_001367468.1">
    <molecule id="W6RTA4-6"/>
    <property type="nucleotide sequence ID" value="NM_001380338.1"/>
</dbReference>
<dbReference type="RefSeq" id="NP_001379640.1">
    <molecule id="W6RTA4-5"/>
    <property type="nucleotide sequence ID" value="NM_001392336.1"/>
</dbReference>
<dbReference type="RefSeq" id="NP_501237.1">
    <property type="nucleotide sequence ID" value="NM_068836.3"/>
</dbReference>
<dbReference type="RefSeq" id="NP_501238.1">
    <property type="nucleotide sequence ID" value="NM_068837.3"/>
</dbReference>
<dbReference type="SMR" id="W6RTA4"/>
<dbReference type="FunCoup" id="W6RTA4">
    <property type="interactions" value="74"/>
</dbReference>
<dbReference type="IntAct" id="W6RTA4">
    <property type="interactions" value="10"/>
</dbReference>
<dbReference type="STRING" id="6239.F45E4.3a.1"/>
<dbReference type="PaxDb" id="6239-Y2C2A.1"/>
<dbReference type="PeptideAtlas" id="W6RTA4"/>
<dbReference type="EnsemblMetazoa" id="F45E4.3a.1">
    <molecule id="W6RTA4-1"/>
    <property type="protein sequence ID" value="F45E4.3a.1"/>
    <property type="gene ID" value="WBGene00018468"/>
</dbReference>
<dbReference type="EnsemblMetazoa" id="F45E4.3b.1">
    <molecule id="W6RTA4-2"/>
    <property type="protein sequence ID" value="F45E4.3b.1"/>
    <property type="gene ID" value="WBGene00018468"/>
</dbReference>
<dbReference type="EnsemblMetazoa" id="F45E4.3c.1">
    <molecule id="W6RTA4-3"/>
    <property type="protein sequence ID" value="F45E4.3c.1"/>
    <property type="gene ID" value="WBGene00018468"/>
</dbReference>
<dbReference type="EnsemblMetazoa" id="F45E4.3d.1">
    <molecule id="W6RTA4-4"/>
    <property type="protein sequence ID" value="F45E4.3d.1"/>
    <property type="gene ID" value="WBGene00018468"/>
</dbReference>
<dbReference type="EnsemblMetazoa" id="F45E4.3e.1">
    <molecule id="W6RTA4-5"/>
    <property type="protein sequence ID" value="F45E4.3e.1"/>
    <property type="gene ID" value="WBGene00018468"/>
</dbReference>
<dbReference type="EnsemblMetazoa" id="F45E4.3f.1">
    <molecule id="W6RTA4-6"/>
    <property type="protein sequence ID" value="F45E4.3f.1"/>
    <property type="gene ID" value="WBGene00018468"/>
</dbReference>
<dbReference type="GeneID" id="177539"/>
<dbReference type="KEGG" id="cel:CELE_F45E4.3"/>
<dbReference type="UCSC" id="F45E4.3b.1">
    <property type="organism name" value="c. elegans"/>
</dbReference>
<dbReference type="AGR" id="WB:WBGene00018468"/>
<dbReference type="CTD" id="177539"/>
<dbReference type="WormBase" id="F45E4.3a">
    <molecule id="W6RTA4-1"/>
    <property type="protein sequence ID" value="CE51009"/>
    <property type="gene ID" value="WBGene00018468"/>
    <property type="gene designation" value="cla-1"/>
</dbReference>
<dbReference type="WormBase" id="F45E4.3b">
    <molecule id="W6RTA4-2"/>
    <property type="protein sequence ID" value="CE51026"/>
    <property type="gene ID" value="WBGene00018468"/>
    <property type="gene designation" value="cla-1"/>
</dbReference>
<dbReference type="WormBase" id="F45E4.3c">
    <molecule id="W6RTA4-3"/>
    <property type="protein sequence ID" value="CE49484"/>
    <property type="gene ID" value="WBGene00018468"/>
    <property type="gene designation" value="cla-1"/>
</dbReference>
<dbReference type="WormBase" id="F45E4.3d">
    <molecule id="W6RTA4-4"/>
    <property type="protein sequence ID" value="CE49489"/>
    <property type="gene ID" value="WBGene00018468"/>
    <property type="gene designation" value="cla-1"/>
</dbReference>
<dbReference type="WormBase" id="F45E4.3e">
    <molecule id="W6RTA4-5"/>
    <property type="protein sequence ID" value="CE24980"/>
    <property type="gene ID" value="WBGene00018468"/>
    <property type="gene designation" value="cla-1"/>
</dbReference>
<dbReference type="WormBase" id="F45E4.3f">
    <molecule id="W6RTA4-6"/>
    <property type="protein sequence ID" value="CE24981"/>
    <property type="gene ID" value="WBGene00018468"/>
    <property type="gene designation" value="cla-1"/>
</dbReference>
<dbReference type="eggNOG" id="KOG1181">
    <property type="taxonomic scope" value="Eukaryota"/>
</dbReference>
<dbReference type="eggNOG" id="KOG2060">
    <property type="taxonomic scope" value="Eukaryota"/>
</dbReference>
<dbReference type="GeneTree" id="ENSGT00620000087961"/>
<dbReference type="HOGENOM" id="CLU_222840_0_0_1"/>
<dbReference type="InParanoid" id="W6RTA4"/>
<dbReference type="OMA" id="EDKYEQP"/>
<dbReference type="OrthoDB" id="270970at2759"/>
<dbReference type="PRO" id="PR:W6RTA4"/>
<dbReference type="Proteomes" id="UP000001940">
    <property type="component" value="Chromosome IV"/>
</dbReference>
<dbReference type="Bgee" id="WBGene00018468">
    <property type="expression patterns" value="Expressed in pharyngeal muscle cell (C elegans) and 3 other cell types or tissues"/>
</dbReference>
<dbReference type="GO" id="GO:0030424">
    <property type="term" value="C:axon"/>
    <property type="evidence" value="ECO:0000318"/>
    <property type="project" value="GO_Central"/>
</dbReference>
<dbReference type="GO" id="GO:0031045">
    <property type="term" value="C:dense core granule"/>
    <property type="evidence" value="ECO:0000318"/>
    <property type="project" value="GO_Central"/>
</dbReference>
<dbReference type="GO" id="GO:0070382">
    <property type="term" value="C:exocytic vesicle"/>
    <property type="evidence" value="ECO:0000318"/>
    <property type="project" value="GO_Central"/>
</dbReference>
<dbReference type="GO" id="GO:0005886">
    <property type="term" value="C:plasma membrane"/>
    <property type="evidence" value="ECO:0000318"/>
    <property type="project" value="GO_Central"/>
</dbReference>
<dbReference type="GO" id="GO:0048786">
    <property type="term" value="C:presynaptic active zone"/>
    <property type="evidence" value="ECO:0000314"/>
    <property type="project" value="UniProtKB"/>
</dbReference>
<dbReference type="GO" id="GO:0030672">
    <property type="term" value="C:synaptic vesicle membrane"/>
    <property type="evidence" value="ECO:0000318"/>
    <property type="project" value="GO_Central"/>
</dbReference>
<dbReference type="GO" id="GO:0061891">
    <property type="term" value="F:calcium ion sensor activity"/>
    <property type="evidence" value="ECO:0000318"/>
    <property type="project" value="GO_Central"/>
</dbReference>
<dbReference type="GO" id="GO:0005544">
    <property type="term" value="F:calcium-dependent phospholipid binding"/>
    <property type="evidence" value="ECO:0000318"/>
    <property type="project" value="GO_Central"/>
</dbReference>
<dbReference type="GO" id="GO:0000149">
    <property type="term" value="F:SNARE binding"/>
    <property type="evidence" value="ECO:0000318"/>
    <property type="project" value="GO_Central"/>
</dbReference>
<dbReference type="GO" id="GO:0099502">
    <property type="term" value="P:calcium-dependent activation of synaptic vesicle fusion"/>
    <property type="evidence" value="ECO:0000318"/>
    <property type="project" value="GO_Central"/>
</dbReference>
<dbReference type="GO" id="GO:0048790">
    <property type="term" value="P:maintenance of presynaptic active zone structure"/>
    <property type="evidence" value="ECO:0000315"/>
    <property type="project" value="UniProtKB"/>
</dbReference>
<dbReference type="GO" id="GO:0017158">
    <property type="term" value="P:regulation of calcium ion-dependent exocytosis"/>
    <property type="evidence" value="ECO:0000318"/>
    <property type="project" value="GO_Central"/>
</dbReference>
<dbReference type="GO" id="GO:2000300">
    <property type="term" value="P:regulation of synaptic vesicle exocytosis"/>
    <property type="evidence" value="ECO:0000318"/>
    <property type="project" value="GO_Central"/>
</dbReference>
<dbReference type="GO" id="GO:0098814">
    <property type="term" value="P:spontaneous synaptic transmission"/>
    <property type="evidence" value="ECO:0000315"/>
    <property type="project" value="UniProtKB"/>
</dbReference>
<dbReference type="GO" id="GO:0097091">
    <property type="term" value="P:synaptic vesicle clustering"/>
    <property type="evidence" value="ECO:0000315"/>
    <property type="project" value="UniProtKB"/>
</dbReference>
<dbReference type="GO" id="GO:0016079">
    <property type="term" value="P:synaptic vesicle exocytosis"/>
    <property type="evidence" value="ECO:0000315"/>
    <property type="project" value="UniProtKB"/>
</dbReference>
<dbReference type="GO" id="GO:0016192">
    <property type="term" value="P:vesicle-mediated transport"/>
    <property type="evidence" value="ECO:0000318"/>
    <property type="project" value="GO_Central"/>
</dbReference>
<dbReference type="CDD" id="cd04031">
    <property type="entry name" value="C2A_RIM1alpha"/>
    <property type="match status" value="1"/>
</dbReference>
<dbReference type="CDD" id="cd06714">
    <property type="entry name" value="PDZ_RIM-like"/>
    <property type="match status" value="1"/>
</dbReference>
<dbReference type="Gene3D" id="2.30.42.10">
    <property type="match status" value="1"/>
</dbReference>
<dbReference type="Gene3D" id="2.60.40.150">
    <property type="entry name" value="C2 domain"/>
    <property type="match status" value="1"/>
</dbReference>
<dbReference type="InterPro" id="IPR000008">
    <property type="entry name" value="C2_dom"/>
</dbReference>
<dbReference type="InterPro" id="IPR035892">
    <property type="entry name" value="C2_domain_sf"/>
</dbReference>
<dbReference type="InterPro" id="IPR001478">
    <property type="entry name" value="PDZ"/>
</dbReference>
<dbReference type="InterPro" id="IPR036034">
    <property type="entry name" value="PDZ_sf"/>
</dbReference>
<dbReference type="PANTHER" id="PTHR10024">
    <property type="entry name" value="SYNAPTOTAGMIN"/>
    <property type="match status" value="1"/>
</dbReference>
<dbReference type="Pfam" id="PF00168">
    <property type="entry name" value="C2"/>
    <property type="match status" value="1"/>
</dbReference>
<dbReference type="SMART" id="SM00239">
    <property type="entry name" value="C2"/>
    <property type="match status" value="1"/>
</dbReference>
<dbReference type="SMART" id="SM00228">
    <property type="entry name" value="PDZ"/>
    <property type="match status" value="1"/>
</dbReference>
<dbReference type="SUPFAM" id="SSF49562">
    <property type="entry name" value="C2 domain (Calcium/lipid-binding domain, CaLB)"/>
    <property type="match status" value="1"/>
</dbReference>
<dbReference type="SUPFAM" id="SSF50156">
    <property type="entry name" value="PDZ domain-like"/>
    <property type="match status" value="1"/>
</dbReference>
<dbReference type="PROSITE" id="PS50004">
    <property type="entry name" value="C2"/>
    <property type="match status" value="1"/>
</dbReference>
<dbReference type="PROSITE" id="PS50106">
    <property type="entry name" value="PDZ"/>
    <property type="match status" value="1"/>
</dbReference>
<reference evidence="8" key="1">
    <citation type="journal article" date="1998" name="Science">
        <title>Genome sequence of the nematode C. elegans: a platform for investigating biology.</title>
        <authorList>
            <consortium name="The C. elegans sequencing consortium"/>
        </authorList>
    </citation>
    <scope>NUCLEOTIDE SEQUENCE [LARGE SCALE GENOMIC DNA]</scope>
    <source>
        <strain evidence="8">Bristol N2</strain>
    </source>
</reference>
<reference evidence="7" key="2">
    <citation type="journal article" date="2017" name="Elife">
        <title>Clarinet (CLA-1), a novel active zone protein required for synaptic vesicle clustering and release.</title>
        <authorList>
            <person name="Xuan Z."/>
            <person name="Manning L."/>
            <person name="Nelson J."/>
            <person name="Richmond J.E."/>
            <person name="Colon-Ramos D.A."/>
            <person name="Shen K."/>
            <person name="Kurshan P.T."/>
        </authorList>
    </citation>
    <scope>FUNCTION</scope>
    <scope>SUBCELLULAR LOCATION</scope>
    <scope>TISSUE SPECIFICITY</scope>
    <scope>DEVELOPMENTAL STAGE</scope>
    <scope>MUTAGENESIS OF 6751-PRO--GLY-8892</scope>
</reference>
<name>CLA1_CAEEL</name>
<organism evidence="8">
    <name type="scientific">Caenorhabditis elegans</name>
    <dbReference type="NCBI Taxonomy" id="6239"/>
    <lineage>
        <taxon>Eukaryota</taxon>
        <taxon>Metazoa</taxon>
        <taxon>Ecdysozoa</taxon>
        <taxon>Nematoda</taxon>
        <taxon>Chromadorea</taxon>
        <taxon>Rhabditida</taxon>
        <taxon>Rhabditina</taxon>
        <taxon>Rhabditomorpha</taxon>
        <taxon>Rhabditoidea</taxon>
        <taxon>Rhabditidae</taxon>
        <taxon>Peloderinae</taxon>
        <taxon>Caenorhabditis</taxon>
    </lineage>
</organism>
<protein>
    <recommendedName>
        <fullName evidence="6">Protein clarinet</fullName>
    </recommendedName>
</protein>
<accession>W6RTA4</accession>
<accession>H2KYL0</accession>
<accession>Q9BI65</accession>
<accession>W6RT96</accession>
<accession>W6SB84</accession>
<accession>W6SB91</accession>
<evidence type="ECO:0000255" key="1"/>
<evidence type="ECO:0000255" key="2">
    <source>
        <dbReference type="PROSITE-ProRule" id="PRU00041"/>
    </source>
</evidence>
<evidence type="ECO:0000255" key="3">
    <source>
        <dbReference type="PROSITE-ProRule" id="PRU00143"/>
    </source>
</evidence>
<evidence type="ECO:0000256" key="4">
    <source>
        <dbReference type="SAM" id="MobiDB-lite"/>
    </source>
</evidence>
<evidence type="ECO:0000269" key="5">
    <source>
    </source>
</evidence>
<evidence type="ECO:0000303" key="6">
    <source>
    </source>
</evidence>
<evidence type="ECO:0000305" key="7"/>
<evidence type="ECO:0000312" key="8">
    <source>
        <dbReference type="Proteomes" id="UP000001940"/>
    </source>
</evidence>
<evidence type="ECO:0000312" key="9">
    <source>
        <dbReference type="WormBase" id="F45E4.3a"/>
    </source>
</evidence>
<evidence type="ECO:0000312" key="10">
    <source>
        <dbReference type="WormBase" id="F45E4.3b"/>
    </source>
</evidence>
<evidence type="ECO:0000312" key="11">
    <source>
        <dbReference type="WormBase" id="F45E4.3c"/>
    </source>
</evidence>
<evidence type="ECO:0000312" key="12">
    <source>
        <dbReference type="WormBase" id="F45E4.3d"/>
    </source>
</evidence>
<evidence type="ECO:0000312" key="13">
    <source>
        <dbReference type="WormBase" id="F45E4.3e"/>
    </source>
</evidence>
<evidence type="ECO:0000312" key="14">
    <source>
        <dbReference type="WormBase" id="F45E4.3f"/>
    </source>
</evidence>